<reference key="1">
    <citation type="journal article" date="2005" name="Nat. Biotechnol.">
        <title>The complete genome sequence of the meat-borne lactic acid bacterium Lactobacillus sakei 23K.</title>
        <authorList>
            <person name="Chaillou S."/>
            <person name="Champomier-Verges M.-C."/>
            <person name="Cornet M."/>
            <person name="Crutz-Le Coq A.-M."/>
            <person name="Dudez A.-M."/>
            <person name="Martin V."/>
            <person name="Beaufils S."/>
            <person name="Darbon-Rongere E."/>
            <person name="Bossy R."/>
            <person name="Loux V."/>
            <person name="Zagorec M."/>
        </authorList>
    </citation>
    <scope>NUCLEOTIDE SEQUENCE [LARGE SCALE GENOMIC DNA]</scope>
    <source>
        <strain>23K</strain>
    </source>
</reference>
<sequence length="89" mass="10405">MAISQARKNEIINEYARHEGDTGSAEVQIAVLTAEINSLNEHLSVHKKDHHSYVGQMKKIGHRRNLLRYLRDNDIQRYRELIKSLGLRR</sequence>
<evidence type="ECO:0000255" key="1">
    <source>
        <dbReference type="HAMAP-Rule" id="MF_01343"/>
    </source>
</evidence>
<evidence type="ECO:0000305" key="2"/>
<protein>
    <recommendedName>
        <fullName evidence="1">Small ribosomal subunit protein uS15</fullName>
    </recommendedName>
    <alternativeName>
        <fullName evidence="2">30S ribosomal protein S15</fullName>
    </alternativeName>
</protein>
<proteinExistence type="inferred from homology"/>
<organism>
    <name type="scientific">Latilactobacillus sakei subsp. sakei (strain 23K)</name>
    <name type="common">Lactobacillus sakei subsp. sakei</name>
    <dbReference type="NCBI Taxonomy" id="314315"/>
    <lineage>
        <taxon>Bacteria</taxon>
        <taxon>Bacillati</taxon>
        <taxon>Bacillota</taxon>
        <taxon>Bacilli</taxon>
        <taxon>Lactobacillales</taxon>
        <taxon>Lactobacillaceae</taxon>
        <taxon>Latilactobacillus</taxon>
    </lineage>
</organism>
<comment type="function">
    <text evidence="1">One of the primary rRNA binding proteins, it binds directly to 16S rRNA where it helps nucleate assembly of the platform of the 30S subunit by binding and bridging several RNA helices of the 16S rRNA.</text>
</comment>
<comment type="function">
    <text evidence="1">Forms an intersubunit bridge (bridge B4) with the 23S rRNA of the 50S subunit in the ribosome.</text>
</comment>
<comment type="subunit">
    <text evidence="1">Part of the 30S ribosomal subunit. Forms a bridge to the 50S subunit in the 70S ribosome, contacting the 23S rRNA.</text>
</comment>
<comment type="similarity">
    <text evidence="1">Belongs to the universal ribosomal protein uS15 family.</text>
</comment>
<keyword id="KW-1185">Reference proteome</keyword>
<keyword id="KW-0687">Ribonucleoprotein</keyword>
<keyword id="KW-0689">Ribosomal protein</keyword>
<keyword id="KW-0694">RNA-binding</keyword>
<keyword id="KW-0699">rRNA-binding</keyword>
<dbReference type="EMBL" id="CR936503">
    <property type="protein sequence ID" value="CAI55367.1"/>
    <property type="molecule type" value="Genomic_DNA"/>
</dbReference>
<dbReference type="RefSeq" id="WP_011374766.1">
    <property type="nucleotide sequence ID" value="NC_007576.1"/>
</dbReference>
<dbReference type="SMR" id="Q38WR4"/>
<dbReference type="STRING" id="314315.LCA_1066"/>
<dbReference type="GeneID" id="57133922"/>
<dbReference type="KEGG" id="lsa:LCA_1066"/>
<dbReference type="eggNOG" id="COG0184">
    <property type="taxonomic scope" value="Bacteria"/>
</dbReference>
<dbReference type="HOGENOM" id="CLU_148518_0_0_9"/>
<dbReference type="OrthoDB" id="9799262at2"/>
<dbReference type="Proteomes" id="UP000002707">
    <property type="component" value="Chromosome"/>
</dbReference>
<dbReference type="GO" id="GO:0022627">
    <property type="term" value="C:cytosolic small ribosomal subunit"/>
    <property type="evidence" value="ECO:0007669"/>
    <property type="project" value="TreeGrafter"/>
</dbReference>
<dbReference type="GO" id="GO:0019843">
    <property type="term" value="F:rRNA binding"/>
    <property type="evidence" value="ECO:0007669"/>
    <property type="project" value="UniProtKB-UniRule"/>
</dbReference>
<dbReference type="GO" id="GO:0003735">
    <property type="term" value="F:structural constituent of ribosome"/>
    <property type="evidence" value="ECO:0007669"/>
    <property type="project" value="InterPro"/>
</dbReference>
<dbReference type="GO" id="GO:0006412">
    <property type="term" value="P:translation"/>
    <property type="evidence" value="ECO:0007669"/>
    <property type="project" value="UniProtKB-UniRule"/>
</dbReference>
<dbReference type="CDD" id="cd00353">
    <property type="entry name" value="Ribosomal_S15p_S13e"/>
    <property type="match status" value="1"/>
</dbReference>
<dbReference type="FunFam" id="1.10.287.10:FF:000002">
    <property type="entry name" value="30S ribosomal protein S15"/>
    <property type="match status" value="1"/>
</dbReference>
<dbReference type="Gene3D" id="6.10.250.3130">
    <property type="match status" value="1"/>
</dbReference>
<dbReference type="Gene3D" id="1.10.287.10">
    <property type="entry name" value="S15/NS1, RNA-binding"/>
    <property type="match status" value="1"/>
</dbReference>
<dbReference type="HAMAP" id="MF_01343_B">
    <property type="entry name" value="Ribosomal_uS15_B"/>
    <property type="match status" value="1"/>
</dbReference>
<dbReference type="InterPro" id="IPR000589">
    <property type="entry name" value="Ribosomal_uS15"/>
</dbReference>
<dbReference type="InterPro" id="IPR005290">
    <property type="entry name" value="Ribosomal_uS15_bac-type"/>
</dbReference>
<dbReference type="InterPro" id="IPR009068">
    <property type="entry name" value="uS15_NS1_RNA-bd_sf"/>
</dbReference>
<dbReference type="NCBIfam" id="TIGR00952">
    <property type="entry name" value="S15_bact"/>
    <property type="match status" value="1"/>
</dbReference>
<dbReference type="PANTHER" id="PTHR23321">
    <property type="entry name" value="RIBOSOMAL PROTEIN S15, BACTERIAL AND ORGANELLAR"/>
    <property type="match status" value="1"/>
</dbReference>
<dbReference type="PANTHER" id="PTHR23321:SF26">
    <property type="entry name" value="SMALL RIBOSOMAL SUBUNIT PROTEIN US15M"/>
    <property type="match status" value="1"/>
</dbReference>
<dbReference type="Pfam" id="PF00312">
    <property type="entry name" value="Ribosomal_S15"/>
    <property type="match status" value="1"/>
</dbReference>
<dbReference type="SMART" id="SM01387">
    <property type="entry name" value="Ribosomal_S15"/>
    <property type="match status" value="1"/>
</dbReference>
<dbReference type="SUPFAM" id="SSF47060">
    <property type="entry name" value="S15/NS1 RNA-binding domain"/>
    <property type="match status" value="1"/>
</dbReference>
<name>RS15_LATSS</name>
<gene>
    <name evidence="1" type="primary">rpsO</name>
    <name type="ordered locus">LCA_1066</name>
</gene>
<feature type="chain" id="PRO_0000115456" description="Small ribosomal subunit protein uS15">
    <location>
        <begin position="1"/>
        <end position="89"/>
    </location>
</feature>
<accession>Q38WR4</accession>